<comment type="function">
    <text evidence="1">Involved in the biosynthesis of isopentenyl diphosphate (IPP) and dimethylallyl diphosphate (DMAPP), two major building blocks of isoprenoid compounds. Catalyzes the conversion of 4-diphosphocytidyl-2-C-methyl-D-erythritol 2-phosphate (CDP-ME2P) to 2-C-methyl-D-erythritol 2,4-cyclodiphosphate (ME-CPP) with a corresponding release of cytidine 5-monophosphate (CMP).</text>
</comment>
<comment type="catalytic activity">
    <reaction evidence="1">
        <text>4-CDP-2-C-methyl-D-erythritol 2-phosphate = 2-C-methyl-D-erythritol 2,4-cyclic diphosphate + CMP</text>
        <dbReference type="Rhea" id="RHEA:23864"/>
        <dbReference type="ChEBI" id="CHEBI:57919"/>
        <dbReference type="ChEBI" id="CHEBI:58483"/>
        <dbReference type="ChEBI" id="CHEBI:60377"/>
        <dbReference type="EC" id="4.6.1.12"/>
    </reaction>
</comment>
<comment type="cofactor">
    <cofactor evidence="1">
        <name>a divalent metal cation</name>
        <dbReference type="ChEBI" id="CHEBI:60240"/>
    </cofactor>
    <text evidence="1">Binds 1 divalent metal cation per subunit.</text>
</comment>
<comment type="pathway">
    <text evidence="1">Isoprenoid biosynthesis; isopentenyl diphosphate biosynthesis via DXP pathway; isopentenyl diphosphate from 1-deoxy-D-xylulose 5-phosphate: step 4/6.</text>
</comment>
<comment type="subunit">
    <text evidence="1">Homotrimer.</text>
</comment>
<comment type="similarity">
    <text evidence="1">Belongs to the IspF family.</text>
</comment>
<proteinExistence type="inferred from homology"/>
<evidence type="ECO:0000255" key="1">
    <source>
        <dbReference type="HAMAP-Rule" id="MF_00107"/>
    </source>
</evidence>
<name>ISPF_ECO57</name>
<dbReference type="EC" id="4.6.1.12" evidence="1"/>
<dbReference type="EMBL" id="AE005174">
    <property type="protein sequence ID" value="AAG57853.1"/>
    <property type="molecule type" value="Genomic_DNA"/>
</dbReference>
<dbReference type="EMBL" id="BA000007">
    <property type="protein sequence ID" value="BAB37023.1"/>
    <property type="molecule type" value="Genomic_DNA"/>
</dbReference>
<dbReference type="PIR" id="A85924">
    <property type="entry name" value="A85924"/>
</dbReference>
<dbReference type="PIR" id="H91078">
    <property type="entry name" value="H91078"/>
</dbReference>
<dbReference type="RefSeq" id="NP_311627.1">
    <property type="nucleotide sequence ID" value="NC_002695.1"/>
</dbReference>
<dbReference type="RefSeq" id="WP_001219242.1">
    <property type="nucleotide sequence ID" value="NZ_VOAI01000003.1"/>
</dbReference>
<dbReference type="SMR" id="P62618"/>
<dbReference type="STRING" id="155864.Z4054"/>
<dbReference type="GeneID" id="914678"/>
<dbReference type="GeneID" id="93779260"/>
<dbReference type="KEGG" id="ece:Z4054"/>
<dbReference type="KEGG" id="ecs:ECs_3600"/>
<dbReference type="PATRIC" id="fig|386585.9.peg.3763"/>
<dbReference type="eggNOG" id="COG0245">
    <property type="taxonomic scope" value="Bacteria"/>
</dbReference>
<dbReference type="HOGENOM" id="CLU_084630_2_0_6"/>
<dbReference type="OMA" id="LIHAIMD"/>
<dbReference type="UniPathway" id="UPA00056">
    <property type="reaction ID" value="UER00095"/>
</dbReference>
<dbReference type="Proteomes" id="UP000000558">
    <property type="component" value="Chromosome"/>
</dbReference>
<dbReference type="Proteomes" id="UP000002519">
    <property type="component" value="Chromosome"/>
</dbReference>
<dbReference type="GO" id="GO:0008685">
    <property type="term" value="F:2-C-methyl-D-erythritol 2,4-cyclodiphosphate synthase activity"/>
    <property type="evidence" value="ECO:0007669"/>
    <property type="project" value="UniProtKB-UniRule"/>
</dbReference>
<dbReference type="GO" id="GO:0046872">
    <property type="term" value="F:metal ion binding"/>
    <property type="evidence" value="ECO:0007669"/>
    <property type="project" value="UniProtKB-KW"/>
</dbReference>
<dbReference type="GO" id="GO:0019288">
    <property type="term" value="P:isopentenyl diphosphate biosynthetic process, methylerythritol 4-phosphate pathway"/>
    <property type="evidence" value="ECO:0007669"/>
    <property type="project" value="UniProtKB-UniRule"/>
</dbReference>
<dbReference type="GO" id="GO:0016114">
    <property type="term" value="P:terpenoid biosynthetic process"/>
    <property type="evidence" value="ECO:0007669"/>
    <property type="project" value="InterPro"/>
</dbReference>
<dbReference type="CDD" id="cd00554">
    <property type="entry name" value="MECDP_synthase"/>
    <property type="match status" value="1"/>
</dbReference>
<dbReference type="FunFam" id="3.30.1330.50:FF:000001">
    <property type="entry name" value="2-C-methyl-D-erythritol 2,4-cyclodiphosphate synthase"/>
    <property type="match status" value="1"/>
</dbReference>
<dbReference type="Gene3D" id="3.30.1330.50">
    <property type="entry name" value="2-C-methyl-D-erythritol 2,4-cyclodiphosphate synthase"/>
    <property type="match status" value="1"/>
</dbReference>
<dbReference type="HAMAP" id="MF_00107">
    <property type="entry name" value="IspF"/>
    <property type="match status" value="1"/>
</dbReference>
<dbReference type="InterPro" id="IPR003526">
    <property type="entry name" value="MECDP_synthase"/>
</dbReference>
<dbReference type="InterPro" id="IPR020555">
    <property type="entry name" value="MECDP_synthase_CS"/>
</dbReference>
<dbReference type="InterPro" id="IPR036571">
    <property type="entry name" value="MECDP_synthase_sf"/>
</dbReference>
<dbReference type="NCBIfam" id="TIGR00151">
    <property type="entry name" value="ispF"/>
    <property type="match status" value="1"/>
</dbReference>
<dbReference type="PANTHER" id="PTHR43181">
    <property type="entry name" value="2-C-METHYL-D-ERYTHRITOL 2,4-CYCLODIPHOSPHATE SYNTHASE, CHLOROPLASTIC"/>
    <property type="match status" value="1"/>
</dbReference>
<dbReference type="PANTHER" id="PTHR43181:SF1">
    <property type="entry name" value="2-C-METHYL-D-ERYTHRITOL 2,4-CYCLODIPHOSPHATE SYNTHASE, CHLOROPLASTIC"/>
    <property type="match status" value="1"/>
</dbReference>
<dbReference type="Pfam" id="PF02542">
    <property type="entry name" value="YgbB"/>
    <property type="match status" value="1"/>
</dbReference>
<dbReference type="SUPFAM" id="SSF69765">
    <property type="entry name" value="IpsF-like"/>
    <property type="match status" value="1"/>
</dbReference>
<dbReference type="PROSITE" id="PS01350">
    <property type="entry name" value="ISPF"/>
    <property type="match status" value="1"/>
</dbReference>
<gene>
    <name evidence="1" type="primary">ispF</name>
    <name type="ordered locus">Z4054</name>
    <name type="ordered locus">ECs3600</name>
</gene>
<accession>P62618</accession>
<accession>P36663</accession>
<protein>
    <recommendedName>
        <fullName evidence="1">2-C-methyl-D-erythritol 2,4-cyclodiphosphate synthase</fullName>
        <shortName evidence="1">MECDP-synthase</shortName>
        <shortName evidence="1">MECPP-synthase</shortName>
        <shortName evidence="1">MECPS</shortName>
        <ecNumber evidence="1">4.6.1.12</ecNumber>
    </recommendedName>
</protein>
<sequence>MRIGHGFDVHAFGGEGPIIIGGVRIPYEKGLLAHSDGDVALHALTDALLGAAALGDIGKLFPDTDPAFKGADSRELLREAWRRIQAKGYTLGNVDVTIIAQAPKMLPHIPQMRVFIAEDLGCHMDDVNVKATTTEKLGFTGRGEGIACEAVALLIKATK</sequence>
<reference key="1">
    <citation type="journal article" date="2001" name="Nature">
        <title>Genome sequence of enterohaemorrhagic Escherichia coli O157:H7.</title>
        <authorList>
            <person name="Perna N.T."/>
            <person name="Plunkett G. III"/>
            <person name="Burland V."/>
            <person name="Mau B."/>
            <person name="Glasner J.D."/>
            <person name="Rose D.J."/>
            <person name="Mayhew G.F."/>
            <person name="Evans P.S."/>
            <person name="Gregor J."/>
            <person name="Kirkpatrick H.A."/>
            <person name="Posfai G."/>
            <person name="Hackett J."/>
            <person name="Klink S."/>
            <person name="Boutin A."/>
            <person name="Shao Y."/>
            <person name="Miller L."/>
            <person name="Grotbeck E.J."/>
            <person name="Davis N.W."/>
            <person name="Lim A."/>
            <person name="Dimalanta E.T."/>
            <person name="Potamousis K."/>
            <person name="Apodaca J."/>
            <person name="Anantharaman T.S."/>
            <person name="Lin J."/>
            <person name="Yen G."/>
            <person name="Schwartz D.C."/>
            <person name="Welch R.A."/>
            <person name="Blattner F.R."/>
        </authorList>
    </citation>
    <scope>NUCLEOTIDE SEQUENCE [LARGE SCALE GENOMIC DNA]</scope>
    <source>
        <strain>O157:H7 / EDL933 / ATCC 700927 / EHEC</strain>
    </source>
</reference>
<reference key="2">
    <citation type="journal article" date="2001" name="DNA Res.">
        <title>Complete genome sequence of enterohemorrhagic Escherichia coli O157:H7 and genomic comparison with a laboratory strain K-12.</title>
        <authorList>
            <person name="Hayashi T."/>
            <person name="Makino K."/>
            <person name="Ohnishi M."/>
            <person name="Kurokawa K."/>
            <person name="Ishii K."/>
            <person name="Yokoyama K."/>
            <person name="Han C.-G."/>
            <person name="Ohtsubo E."/>
            <person name="Nakayama K."/>
            <person name="Murata T."/>
            <person name="Tanaka M."/>
            <person name="Tobe T."/>
            <person name="Iida T."/>
            <person name="Takami H."/>
            <person name="Honda T."/>
            <person name="Sasakawa C."/>
            <person name="Ogasawara N."/>
            <person name="Yasunaga T."/>
            <person name="Kuhara S."/>
            <person name="Shiba T."/>
            <person name="Hattori M."/>
            <person name="Shinagawa H."/>
        </authorList>
    </citation>
    <scope>NUCLEOTIDE SEQUENCE [LARGE SCALE GENOMIC DNA]</scope>
    <source>
        <strain>O157:H7 / Sakai / RIMD 0509952 / EHEC</strain>
    </source>
</reference>
<keyword id="KW-0414">Isoprene biosynthesis</keyword>
<keyword id="KW-0456">Lyase</keyword>
<keyword id="KW-0479">Metal-binding</keyword>
<keyword id="KW-1185">Reference proteome</keyword>
<feature type="chain" id="PRO_0000189465" description="2-C-methyl-D-erythritol 2,4-cyclodiphosphate synthase">
    <location>
        <begin position="1"/>
        <end position="159"/>
    </location>
</feature>
<feature type="binding site" evidence="1">
    <location>
        <begin position="8"/>
        <end position="10"/>
    </location>
    <ligand>
        <name>4-CDP-2-C-methyl-D-erythritol 2-phosphate</name>
        <dbReference type="ChEBI" id="CHEBI:57919"/>
    </ligand>
</feature>
<feature type="binding site" evidence="1">
    <location>
        <position position="8"/>
    </location>
    <ligand>
        <name>a divalent metal cation</name>
        <dbReference type="ChEBI" id="CHEBI:60240"/>
    </ligand>
</feature>
<feature type="binding site" evidence="1">
    <location>
        <position position="10"/>
    </location>
    <ligand>
        <name>a divalent metal cation</name>
        <dbReference type="ChEBI" id="CHEBI:60240"/>
    </ligand>
</feature>
<feature type="binding site" evidence="1">
    <location>
        <begin position="34"/>
        <end position="35"/>
    </location>
    <ligand>
        <name>4-CDP-2-C-methyl-D-erythritol 2-phosphate</name>
        <dbReference type="ChEBI" id="CHEBI:57919"/>
    </ligand>
</feature>
<feature type="binding site" evidence="1">
    <location>
        <position position="42"/>
    </location>
    <ligand>
        <name>a divalent metal cation</name>
        <dbReference type="ChEBI" id="CHEBI:60240"/>
    </ligand>
</feature>
<feature type="binding site" evidence="1">
    <location>
        <begin position="56"/>
        <end position="58"/>
    </location>
    <ligand>
        <name>4-CDP-2-C-methyl-D-erythritol 2-phosphate</name>
        <dbReference type="ChEBI" id="CHEBI:57919"/>
    </ligand>
</feature>
<feature type="binding site" evidence="1">
    <location>
        <begin position="61"/>
        <end position="65"/>
    </location>
    <ligand>
        <name>4-CDP-2-C-methyl-D-erythritol 2-phosphate</name>
        <dbReference type="ChEBI" id="CHEBI:57919"/>
    </ligand>
</feature>
<feature type="binding site" evidence="1">
    <location>
        <begin position="100"/>
        <end position="106"/>
    </location>
    <ligand>
        <name>4-CDP-2-C-methyl-D-erythritol 2-phosphate</name>
        <dbReference type="ChEBI" id="CHEBI:57919"/>
    </ligand>
</feature>
<feature type="binding site" evidence="1">
    <location>
        <begin position="132"/>
        <end position="135"/>
    </location>
    <ligand>
        <name>4-CDP-2-C-methyl-D-erythritol 2-phosphate</name>
        <dbReference type="ChEBI" id="CHEBI:57919"/>
    </ligand>
</feature>
<feature type="binding site" evidence="1">
    <location>
        <position position="139"/>
    </location>
    <ligand>
        <name>4-CDP-2-C-methyl-D-erythritol 2-phosphate</name>
        <dbReference type="ChEBI" id="CHEBI:57919"/>
    </ligand>
</feature>
<feature type="binding site" evidence="1">
    <location>
        <position position="142"/>
    </location>
    <ligand>
        <name>4-CDP-2-C-methyl-D-erythritol 2-phosphate</name>
        <dbReference type="ChEBI" id="CHEBI:57919"/>
    </ligand>
</feature>
<feature type="site" description="Transition state stabilizer" evidence="1">
    <location>
        <position position="34"/>
    </location>
</feature>
<feature type="site" description="Transition state stabilizer" evidence="1">
    <location>
        <position position="133"/>
    </location>
</feature>
<organism>
    <name type="scientific">Escherichia coli O157:H7</name>
    <dbReference type="NCBI Taxonomy" id="83334"/>
    <lineage>
        <taxon>Bacteria</taxon>
        <taxon>Pseudomonadati</taxon>
        <taxon>Pseudomonadota</taxon>
        <taxon>Gammaproteobacteria</taxon>
        <taxon>Enterobacterales</taxon>
        <taxon>Enterobacteriaceae</taxon>
        <taxon>Escherichia</taxon>
    </lineage>
</organism>